<gene>
    <name type="primary">CDase</name>
    <name type="synonym">slab</name>
    <name type="ORF">CG1471</name>
</gene>
<proteinExistence type="evidence at protein level"/>
<evidence type="ECO:0000250" key="1"/>
<evidence type="ECO:0000255" key="2"/>
<evidence type="ECO:0000269" key="3">
    <source>
    </source>
</evidence>
<evidence type="ECO:0000269" key="4">
    <source>
    </source>
</evidence>
<evidence type="ECO:0000305" key="5"/>
<organism>
    <name type="scientific">Drosophila melanogaster</name>
    <name type="common">Fruit fly</name>
    <dbReference type="NCBI Taxonomy" id="7227"/>
    <lineage>
        <taxon>Eukaryota</taxon>
        <taxon>Metazoa</taxon>
        <taxon>Ecdysozoa</taxon>
        <taxon>Arthropoda</taxon>
        <taxon>Hexapoda</taxon>
        <taxon>Insecta</taxon>
        <taxon>Pterygota</taxon>
        <taxon>Neoptera</taxon>
        <taxon>Endopterygota</taxon>
        <taxon>Diptera</taxon>
        <taxon>Brachycera</taxon>
        <taxon>Muscomorpha</taxon>
        <taxon>Ephydroidea</taxon>
        <taxon>Drosophilidae</taxon>
        <taxon>Drosophila</taxon>
        <taxon>Sophophora</taxon>
    </lineage>
</organism>
<feature type="signal peptide" evidence="2">
    <location>
        <begin position="1"/>
        <end position="23"/>
    </location>
</feature>
<feature type="chain" id="PRO_0000247106" description="Neutral ceramidase">
    <location>
        <begin position="24"/>
        <end position="704"/>
    </location>
</feature>
<feature type="active site" description="Nucleophile" evidence="1">
    <location>
        <position position="276"/>
    </location>
</feature>
<feature type="glycosylation site" description="N-linked (GlcNAc...) asparagine" evidence="2">
    <location>
        <position position="230"/>
    </location>
</feature>
<feature type="glycosylation site" description="N-linked (GlcNAc...) asparagine" evidence="2">
    <location>
        <position position="362"/>
    </location>
</feature>
<feature type="glycosylation site" description="N-linked (GlcNAc...) asparagine" evidence="2">
    <location>
        <position position="550"/>
    </location>
</feature>
<feature type="glycosylation site" description="N-linked (GlcNAc...) asparagine" evidence="2">
    <location>
        <position position="598"/>
    </location>
</feature>
<feature type="mutagenesis site" description="In slab1; induces embryonic lethality." evidence="4">
    <original>V</original>
    <variation>M</variation>
    <location>
        <position position="264"/>
    </location>
</feature>
<feature type="sequence conflict" description="In Ref. 1; BAC77635 and 4; AAO42635." evidence="5" ref="1 4">
    <original>V</original>
    <variation>A</variation>
    <location>
        <position position="21"/>
    </location>
</feature>
<feature type="sequence conflict" description="In Ref. 1; BAC77635." evidence="5" ref="1">
    <original>R</original>
    <variation>L</variation>
    <location>
        <position position="343"/>
    </location>
</feature>
<feature type="sequence conflict" description="In Ref. 1; BAC77635." evidence="5" ref="1">
    <original>I</original>
    <variation>V</variation>
    <location>
        <position position="376"/>
    </location>
</feature>
<feature type="sequence conflict" description="In Ref. 1; BAC77635 and 4; AAO42635." evidence="5" ref="1 4">
    <original>V</original>
    <variation>I</variation>
    <location>
        <position position="646"/>
    </location>
</feature>
<sequence>MANSKMAFLAFLAVSFLCGLVSATYKVGVGRADITGPPVEINFMGYANIKQVGRGIHTRVFARAFVVEDEKGNRVAFVSADAGMMGYGLKREVIKRLQARYGNIYHNDNVAISGTHTHGAPGGFLMHLLYDISILGFVPQTFEVMAQGLYLCIKRATDNLVDGRILLSKTTVLNVNINRSPSSYLRNPAEERAQYEHDTDKTLTQLRFVDLENNLLGAFNWYAVHATSMNNTNRLVTSDNVGYAALLLEKEYNPNKMPGKGKFVGAFCSSNLGDVSPNIMGPKCSISGNECDLLTSRCPTGEGDCFASGPGKDMFESTQILGQRLADAALGLLNEQSQESTAREVTGDVRFIHQFVDMPNYNGSTYNPLSRKVDKIRGCQPAMGYSFAAGTTDGPGAFSFEQGTTTDNPMWNFVRDFIAAPTQEDIKCHEPKPILLATGRATFPYEWQPKIVSDQLLKIGDVIIAAVPCEFTTMAGRRLRNQIRAAASAVGGIDTEVIIAGLTNIYTSYTVTPEEYQAQRYEAASTIFGPHTHSIYMDVFERLTKAMMRNETVDAGPSPPYMNDVMLSLNTGVLFDGHPINTDFGYVKSQPNKEYGINETVKVTYISGNPRNNLFTEKTYFTIERKINEDRWKVAYTDASWETKMVWHRTNTILGFSEMDIYWDISPQTLPGEYRIRHSGEYKYILGGKYPYEGLTHSFTVKED</sequence>
<dbReference type="EC" id="3.5.1.23"/>
<dbReference type="EMBL" id="AB112076">
    <property type="protein sequence ID" value="BAC77635.1"/>
    <property type="molecule type" value="mRNA"/>
</dbReference>
<dbReference type="EMBL" id="AE014297">
    <property type="protein sequence ID" value="AAN14231.1"/>
    <property type="molecule type" value="Genomic_DNA"/>
</dbReference>
<dbReference type="EMBL" id="BT004471">
    <property type="protein sequence ID" value="AAO42635.1"/>
    <property type="molecule type" value="mRNA"/>
</dbReference>
<dbReference type="RefSeq" id="NP_001263109.1">
    <property type="nucleotide sequence ID" value="NM_001276180.1"/>
</dbReference>
<dbReference type="RefSeq" id="NP_651797.1">
    <property type="nucleotide sequence ID" value="NM_143540.2"/>
</dbReference>
<dbReference type="RefSeq" id="NP_733367.1">
    <property type="nucleotide sequence ID" value="NM_170488.2"/>
</dbReference>
<dbReference type="RefSeq" id="NP_733368.1">
    <property type="nucleotide sequence ID" value="NM_170489.2"/>
</dbReference>
<dbReference type="RefSeq" id="NP_733369.1">
    <property type="nucleotide sequence ID" value="NM_170490.2"/>
</dbReference>
<dbReference type="RefSeq" id="NP_733370.1">
    <property type="nucleotide sequence ID" value="NM_170491.2"/>
</dbReference>
<dbReference type="SMR" id="Q9VA70"/>
<dbReference type="BioGRID" id="68472">
    <property type="interactions" value="8"/>
</dbReference>
<dbReference type="FunCoup" id="Q9VA70">
    <property type="interactions" value="199"/>
</dbReference>
<dbReference type="IntAct" id="Q9VA70">
    <property type="interactions" value="3"/>
</dbReference>
<dbReference type="STRING" id="7227.FBpp0085011"/>
<dbReference type="GlyCosmos" id="Q9VA70">
    <property type="glycosylation" value="4 sites, No reported glycans"/>
</dbReference>
<dbReference type="GlyGen" id="Q9VA70">
    <property type="glycosylation" value="4 sites"/>
</dbReference>
<dbReference type="PaxDb" id="7227-FBpp0303775"/>
<dbReference type="EnsemblMetazoa" id="FBtr0085645">
    <property type="protein sequence ID" value="FBpp0085007"/>
    <property type="gene ID" value="FBgn0039774"/>
</dbReference>
<dbReference type="EnsemblMetazoa" id="FBtr0085646">
    <property type="protein sequence ID" value="FBpp0085008"/>
    <property type="gene ID" value="FBgn0039774"/>
</dbReference>
<dbReference type="EnsemblMetazoa" id="FBtr0085647">
    <property type="protein sequence ID" value="FBpp0085009"/>
    <property type="gene ID" value="FBgn0039774"/>
</dbReference>
<dbReference type="EnsemblMetazoa" id="FBtr0085648">
    <property type="protein sequence ID" value="FBpp0085010"/>
    <property type="gene ID" value="FBgn0039774"/>
</dbReference>
<dbReference type="EnsemblMetazoa" id="FBtr0085649">
    <property type="protein sequence ID" value="FBpp0085011"/>
    <property type="gene ID" value="FBgn0039774"/>
</dbReference>
<dbReference type="EnsemblMetazoa" id="FBtr0331357">
    <property type="protein sequence ID" value="FBpp0303775"/>
    <property type="gene ID" value="FBgn0039774"/>
</dbReference>
<dbReference type="GeneID" id="43618"/>
<dbReference type="KEGG" id="dme:Dmel_CG1471"/>
<dbReference type="UCSC" id="CG1471-RA">
    <property type="organism name" value="d. melanogaster"/>
</dbReference>
<dbReference type="AGR" id="FB:FBgn0039774"/>
<dbReference type="CTD" id="43618"/>
<dbReference type="FlyBase" id="FBgn0039774">
    <property type="gene designation" value="CDase"/>
</dbReference>
<dbReference type="VEuPathDB" id="VectorBase:FBgn0039774"/>
<dbReference type="eggNOG" id="KOG2232">
    <property type="taxonomic scope" value="Eukaryota"/>
</dbReference>
<dbReference type="GeneTree" id="ENSGT00390000015792"/>
<dbReference type="HOGENOM" id="CLU_011300_2_0_1"/>
<dbReference type="InParanoid" id="Q9VA70"/>
<dbReference type="OMA" id="GTTVQTC"/>
<dbReference type="OrthoDB" id="191371at2759"/>
<dbReference type="PhylomeDB" id="Q9VA70"/>
<dbReference type="BRENDA" id="3.5.1.23">
    <property type="organism ID" value="1994"/>
</dbReference>
<dbReference type="Reactome" id="R-DME-9840310">
    <property type="pathway name" value="Glycosphingolipid catabolism"/>
</dbReference>
<dbReference type="BioGRID-ORCS" id="43618">
    <property type="hits" value="0 hits in 3 CRISPR screens"/>
</dbReference>
<dbReference type="GenomeRNAi" id="43618"/>
<dbReference type="PRO" id="PR:Q9VA70"/>
<dbReference type="Proteomes" id="UP000000803">
    <property type="component" value="Chromosome 3R"/>
</dbReference>
<dbReference type="Bgee" id="FBgn0039774">
    <property type="expression patterns" value="Expressed in ensheathing neuropil associated glial cell (Drosophila) in brain and 56 other cell types or tissues"/>
</dbReference>
<dbReference type="ExpressionAtlas" id="Q9VA70">
    <property type="expression patterns" value="baseline and differential"/>
</dbReference>
<dbReference type="GO" id="GO:0005737">
    <property type="term" value="C:cytoplasm"/>
    <property type="evidence" value="ECO:0000314"/>
    <property type="project" value="FlyBase"/>
</dbReference>
<dbReference type="GO" id="GO:0005576">
    <property type="term" value="C:extracellular region"/>
    <property type="evidence" value="ECO:0000314"/>
    <property type="project" value="UniProtKB"/>
</dbReference>
<dbReference type="GO" id="GO:0016020">
    <property type="term" value="C:membrane"/>
    <property type="evidence" value="ECO:0007669"/>
    <property type="project" value="GOC"/>
</dbReference>
<dbReference type="GO" id="GO:0098793">
    <property type="term" value="C:presynapse"/>
    <property type="evidence" value="ECO:0007669"/>
    <property type="project" value="GOC"/>
</dbReference>
<dbReference type="GO" id="GO:0017040">
    <property type="term" value="F:N-acylsphingosine amidohydrolase activity"/>
    <property type="evidence" value="ECO:0000314"/>
    <property type="project" value="UniProtKB"/>
</dbReference>
<dbReference type="GO" id="GO:0046514">
    <property type="term" value="P:ceramide catabolic process"/>
    <property type="evidence" value="ECO:0000314"/>
    <property type="project" value="UniProtKB"/>
</dbReference>
<dbReference type="GO" id="GO:0007268">
    <property type="term" value="P:chemical synaptic transmission"/>
    <property type="evidence" value="ECO:0000315"/>
    <property type="project" value="FlyBase"/>
</dbReference>
<dbReference type="GO" id="GO:0035187">
    <property type="term" value="P:hatching behavior"/>
    <property type="evidence" value="ECO:0000315"/>
    <property type="project" value="FlyBase"/>
</dbReference>
<dbReference type="GO" id="GO:0042759">
    <property type="term" value="P:long-chain fatty acid biosynthetic process"/>
    <property type="evidence" value="ECO:0000318"/>
    <property type="project" value="GO_Central"/>
</dbReference>
<dbReference type="GO" id="GO:0045494">
    <property type="term" value="P:photoreceptor cell maintenance"/>
    <property type="evidence" value="ECO:0000315"/>
    <property type="project" value="FlyBase"/>
</dbReference>
<dbReference type="GO" id="GO:0006665">
    <property type="term" value="P:sphingolipid metabolic process"/>
    <property type="evidence" value="ECO:0000314"/>
    <property type="project" value="UniProtKB"/>
</dbReference>
<dbReference type="GO" id="GO:0046512">
    <property type="term" value="P:sphingosine biosynthetic process"/>
    <property type="evidence" value="ECO:0000318"/>
    <property type="project" value="GO_Central"/>
</dbReference>
<dbReference type="GO" id="GO:0016079">
    <property type="term" value="P:synaptic vesicle exocytosis"/>
    <property type="evidence" value="ECO:0000315"/>
    <property type="project" value="FlyBase"/>
</dbReference>
<dbReference type="GO" id="GO:0031629">
    <property type="term" value="P:synaptic vesicle fusion to presynaptic active zone membrane"/>
    <property type="evidence" value="ECO:0000315"/>
    <property type="project" value="UniProtKB"/>
</dbReference>
<dbReference type="FunFam" id="2.60.40.2300:FF:000003">
    <property type="entry name" value="Neutral ceramidase"/>
    <property type="match status" value="1"/>
</dbReference>
<dbReference type="Gene3D" id="2.60.40.2300">
    <property type="entry name" value="Neutral/alkaline non-lysosomal ceramidase, C-terminal domain"/>
    <property type="match status" value="1"/>
</dbReference>
<dbReference type="InterPro" id="IPR006823">
    <property type="entry name" value="Ceramidase_alk"/>
</dbReference>
<dbReference type="InterPro" id="IPR038445">
    <property type="entry name" value="NCDase_C_sf"/>
</dbReference>
<dbReference type="InterPro" id="IPR031331">
    <property type="entry name" value="NEUT/ALK_ceramidase_C"/>
</dbReference>
<dbReference type="InterPro" id="IPR031329">
    <property type="entry name" value="NEUT/ALK_ceramidase_N"/>
</dbReference>
<dbReference type="PANTHER" id="PTHR12670">
    <property type="entry name" value="CERAMIDASE"/>
    <property type="match status" value="1"/>
</dbReference>
<dbReference type="PANTHER" id="PTHR12670:SF1">
    <property type="entry name" value="NEUTRAL CERAMIDASE"/>
    <property type="match status" value="1"/>
</dbReference>
<dbReference type="Pfam" id="PF04734">
    <property type="entry name" value="Ceramidase_alk"/>
    <property type="match status" value="1"/>
</dbReference>
<dbReference type="Pfam" id="PF17048">
    <property type="entry name" value="Ceramidse_alk_C"/>
    <property type="match status" value="1"/>
</dbReference>
<comment type="function">
    <text evidence="4">Hydrolyzes the sphingolipid ceramide into sphingosine and free fatty acid at an optimal pH of 6.5-7.5. Acts as a key regulator of sphingolipid signaling metabolites by generating sphingosine at the cell surface. Regulates synaptic vesicle exocytosis and trafficking by controlling presynaptic terminal sphingolipid composition.</text>
</comment>
<comment type="catalytic activity">
    <reaction evidence="3">
        <text>an N-acylsphing-4-enine + H2O = sphing-4-enine + a fatty acid</text>
        <dbReference type="Rhea" id="RHEA:20856"/>
        <dbReference type="ChEBI" id="CHEBI:15377"/>
        <dbReference type="ChEBI" id="CHEBI:28868"/>
        <dbReference type="ChEBI" id="CHEBI:52639"/>
        <dbReference type="ChEBI" id="CHEBI:57756"/>
        <dbReference type="EC" id="3.5.1.23"/>
    </reaction>
</comment>
<comment type="subcellular location">
    <subcellularLocation>
        <location evidence="3">Secreted</location>
    </subcellularLocation>
</comment>
<comment type="tissue specificity">
    <text evidence="4">Widely expressed in different tissues but enriched in neurons at all stages of development.</text>
</comment>
<comment type="PTM">
    <text evidence="3">N-glycosylated.</text>
</comment>
<comment type="miscellaneous">
    <text>Overexpression rescues retinal degeneration in arrestin and phospholipase C mutants, probably by facilitating membrane turnover and endocytosis of rhodopsin in photoreceptors.</text>
</comment>
<comment type="similarity">
    <text evidence="5">Belongs to the neutral ceramidase family.</text>
</comment>
<name>NCASE_DROME</name>
<protein>
    <recommendedName>
        <fullName>Neutral ceramidase</fullName>
        <shortName>N-CDase</shortName>
        <shortName>NCDase</shortName>
        <ecNumber>3.5.1.23</ecNumber>
    </recommendedName>
    <alternativeName>
        <fullName>Neutral N-acylsphingosine amidohydrolase</fullName>
    </alternativeName>
    <alternativeName>
        <fullName>Neutral acylsphingosine deacylase</fullName>
    </alternativeName>
    <alternativeName>
        <fullName>Slug-a-bed protein</fullName>
    </alternativeName>
</protein>
<accession>Q9VA70</accession>
<accession>Q7YTD8</accession>
<accession>Q86NP1</accession>
<reference key="1">
    <citation type="journal article" date="2002" name="J. Biochem.">
        <title>Molecular cloning and characterization of a secretory neutral ceramidase of Drosophila melanogaster.</title>
        <authorList>
            <person name="Yoshimura Y."/>
            <person name="Okino N."/>
            <person name="Tani M."/>
            <person name="Ito M."/>
        </authorList>
    </citation>
    <scope>NUCLEOTIDE SEQUENCE [MRNA]</scope>
    <scope>ENZYME ACTIVITY</scope>
    <scope>SUBCELLULAR LOCATION</scope>
    <scope>GLYCOSYLATION</scope>
    <source>
        <tissue>Imaginal disk</tissue>
    </source>
</reference>
<reference key="2">
    <citation type="journal article" date="2000" name="Science">
        <title>The genome sequence of Drosophila melanogaster.</title>
        <authorList>
            <person name="Adams M.D."/>
            <person name="Celniker S.E."/>
            <person name="Holt R.A."/>
            <person name="Evans C.A."/>
            <person name="Gocayne J.D."/>
            <person name="Amanatides P.G."/>
            <person name="Scherer S.E."/>
            <person name="Li P.W."/>
            <person name="Hoskins R.A."/>
            <person name="Galle R.F."/>
            <person name="George R.A."/>
            <person name="Lewis S.E."/>
            <person name="Richards S."/>
            <person name="Ashburner M."/>
            <person name="Henderson S.N."/>
            <person name="Sutton G.G."/>
            <person name="Wortman J.R."/>
            <person name="Yandell M.D."/>
            <person name="Zhang Q."/>
            <person name="Chen L.X."/>
            <person name="Brandon R.C."/>
            <person name="Rogers Y.-H.C."/>
            <person name="Blazej R.G."/>
            <person name="Champe M."/>
            <person name="Pfeiffer B.D."/>
            <person name="Wan K.H."/>
            <person name="Doyle C."/>
            <person name="Baxter E.G."/>
            <person name="Helt G."/>
            <person name="Nelson C.R."/>
            <person name="Miklos G.L.G."/>
            <person name="Abril J.F."/>
            <person name="Agbayani A."/>
            <person name="An H.-J."/>
            <person name="Andrews-Pfannkoch C."/>
            <person name="Baldwin D."/>
            <person name="Ballew R.M."/>
            <person name="Basu A."/>
            <person name="Baxendale J."/>
            <person name="Bayraktaroglu L."/>
            <person name="Beasley E.M."/>
            <person name="Beeson K.Y."/>
            <person name="Benos P.V."/>
            <person name="Berman B.P."/>
            <person name="Bhandari D."/>
            <person name="Bolshakov S."/>
            <person name="Borkova D."/>
            <person name="Botchan M.R."/>
            <person name="Bouck J."/>
            <person name="Brokstein P."/>
            <person name="Brottier P."/>
            <person name="Burtis K.C."/>
            <person name="Busam D.A."/>
            <person name="Butler H."/>
            <person name="Cadieu E."/>
            <person name="Center A."/>
            <person name="Chandra I."/>
            <person name="Cherry J.M."/>
            <person name="Cawley S."/>
            <person name="Dahlke C."/>
            <person name="Davenport L.B."/>
            <person name="Davies P."/>
            <person name="de Pablos B."/>
            <person name="Delcher A."/>
            <person name="Deng Z."/>
            <person name="Mays A.D."/>
            <person name="Dew I."/>
            <person name="Dietz S.M."/>
            <person name="Dodson K."/>
            <person name="Doup L.E."/>
            <person name="Downes M."/>
            <person name="Dugan-Rocha S."/>
            <person name="Dunkov B.C."/>
            <person name="Dunn P."/>
            <person name="Durbin K.J."/>
            <person name="Evangelista C.C."/>
            <person name="Ferraz C."/>
            <person name="Ferriera S."/>
            <person name="Fleischmann W."/>
            <person name="Fosler C."/>
            <person name="Gabrielian A.E."/>
            <person name="Garg N.S."/>
            <person name="Gelbart W.M."/>
            <person name="Glasser K."/>
            <person name="Glodek A."/>
            <person name="Gong F."/>
            <person name="Gorrell J.H."/>
            <person name="Gu Z."/>
            <person name="Guan P."/>
            <person name="Harris M."/>
            <person name="Harris N.L."/>
            <person name="Harvey D.A."/>
            <person name="Heiman T.J."/>
            <person name="Hernandez J.R."/>
            <person name="Houck J."/>
            <person name="Hostin D."/>
            <person name="Houston K.A."/>
            <person name="Howland T.J."/>
            <person name="Wei M.-H."/>
            <person name="Ibegwam C."/>
            <person name="Jalali M."/>
            <person name="Kalush F."/>
            <person name="Karpen G.H."/>
            <person name="Ke Z."/>
            <person name="Kennison J.A."/>
            <person name="Ketchum K.A."/>
            <person name="Kimmel B.E."/>
            <person name="Kodira C.D."/>
            <person name="Kraft C.L."/>
            <person name="Kravitz S."/>
            <person name="Kulp D."/>
            <person name="Lai Z."/>
            <person name="Lasko P."/>
            <person name="Lei Y."/>
            <person name="Levitsky A.A."/>
            <person name="Li J.H."/>
            <person name="Li Z."/>
            <person name="Liang Y."/>
            <person name="Lin X."/>
            <person name="Liu X."/>
            <person name="Mattei B."/>
            <person name="McIntosh T.C."/>
            <person name="McLeod M.P."/>
            <person name="McPherson D."/>
            <person name="Merkulov G."/>
            <person name="Milshina N.V."/>
            <person name="Mobarry C."/>
            <person name="Morris J."/>
            <person name="Moshrefi A."/>
            <person name="Mount S.M."/>
            <person name="Moy M."/>
            <person name="Murphy B."/>
            <person name="Murphy L."/>
            <person name="Muzny D.M."/>
            <person name="Nelson D.L."/>
            <person name="Nelson D.R."/>
            <person name="Nelson K.A."/>
            <person name="Nixon K."/>
            <person name="Nusskern D.R."/>
            <person name="Pacleb J.M."/>
            <person name="Palazzolo M."/>
            <person name="Pittman G.S."/>
            <person name="Pan S."/>
            <person name="Pollard J."/>
            <person name="Puri V."/>
            <person name="Reese M.G."/>
            <person name="Reinert K."/>
            <person name="Remington K."/>
            <person name="Saunders R.D.C."/>
            <person name="Scheeler F."/>
            <person name="Shen H."/>
            <person name="Shue B.C."/>
            <person name="Siden-Kiamos I."/>
            <person name="Simpson M."/>
            <person name="Skupski M.P."/>
            <person name="Smith T.J."/>
            <person name="Spier E."/>
            <person name="Spradling A.C."/>
            <person name="Stapleton M."/>
            <person name="Strong R."/>
            <person name="Sun E."/>
            <person name="Svirskas R."/>
            <person name="Tector C."/>
            <person name="Turner R."/>
            <person name="Venter E."/>
            <person name="Wang A.H."/>
            <person name="Wang X."/>
            <person name="Wang Z.-Y."/>
            <person name="Wassarman D.A."/>
            <person name="Weinstock G.M."/>
            <person name="Weissenbach J."/>
            <person name="Williams S.M."/>
            <person name="Woodage T."/>
            <person name="Worley K.C."/>
            <person name="Wu D."/>
            <person name="Yang S."/>
            <person name="Yao Q.A."/>
            <person name="Ye J."/>
            <person name="Yeh R.-F."/>
            <person name="Zaveri J.S."/>
            <person name="Zhan M."/>
            <person name="Zhang G."/>
            <person name="Zhao Q."/>
            <person name="Zheng L."/>
            <person name="Zheng X.H."/>
            <person name="Zhong F.N."/>
            <person name="Zhong W."/>
            <person name="Zhou X."/>
            <person name="Zhu S.C."/>
            <person name="Zhu X."/>
            <person name="Smith H.O."/>
            <person name="Gibbs R.A."/>
            <person name="Myers E.W."/>
            <person name="Rubin G.M."/>
            <person name="Venter J.C."/>
        </authorList>
    </citation>
    <scope>NUCLEOTIDE SEQUENCE [LARGE SCALE GENOMIC DNA]</scope>
    <source>
        <strain>Berkeley</strain>
    </source>
</reference>
<reference key="3">
    <citation type="journal article" date="2002" name="Genome Biol.">
        <title>Annotation of the Drosophila melanogaster euchromatic genome: a systematic review.</title>
        <authorList>
            <person name="Misra S."/>
            <person name="Crosby M.A."/>
            <person name="Mungall C.J."/>
            <person name="Matthews B.B."/>
            <person name="Campbell K.S."/>
            <person name="Hradecky P."/>
            <person name="Huang Y."/>
            <person name="Kaminker J.S."/>
            <person name="Millburn G.H."/>
            <person name="Prochnik S.E."/>
            <person name="Smith C.D."/>
            <person name="Tupy J.L."/>
            <person name="Whitfield E.J."/>
            <person name="Bayraktaroglu L."/>
            <person name="Berman B.P."/>
            <person name="Bettencourt B.R."/>
            <person name="Celniker S.E."/>
            <person name="de Grey A.D.N.J."/>
            <person name="Drysdale R.A."/>
            <person name="Harris N.L."/>
            <person name="Richter J."/>
            <person name="Russo S."/>
            <person name="Schroeder A.J."/>
            <person name="Shu S.Q."/>
            <person name="Stapleton M."/>
            <person name="Yamada C."/>
            <person name="Ashburner M."/>
            <person name="Gelbart W.M."/>
            <person name="Rubin G.M."/>
            <person name="Lewis S.E."/>
        </authorList>
    </citation>
    <scope>GENOME REANNOTATION</scope>
    <source>
        <strain>Berkeley</strain>
    </source>
</reference>
<reference key="4">
    <citation type="submission" date="2003-02" db="EMBL/GenBank/DDBJ databases">
        <authorList>
            <person name="Stapleton M."/>
            <person name="Brokstein P."/>
            <person name="Hong L."/>
            <person name="Agbayani A."/>
            <person name="Carlson J.W."/>
            <person name="Champe M."/>
            <person name="Chavez C."/>
            <person name="Dorsett V."/>
            <person name="Dresnek D."/>
            <person name="Farfan D."/>
            <person name="Frise E."/>
            <person name="George R.A."/>
            <person name="Gonzalez M."/>
            <person name="Guarin H."/>
            <person name="Kronmiller B."/>
            <person name="Li P.W."/>
            <person name="Liao G."/>
            <person name="Miranda A."/>
            <person name="Mungall C.J."/>
            <person name="Nunoo J."/>
            <person name="Pacleb J.M."/>
            <person name="Paragas V."/>
            <person name="Park S."/>
            <person name="Patel S."/>
            <person name="Phouanenavong S."/>
            <person name="Wan K.H."/>
            <person name="Yu C."/>
            <person name="Lewis S.E."/>
            <person name="Rubin G.M."/>
            <person name="Celniker S.E."/>
        </authorList>
    </citation>
    <scope>NUCLEOTIDE SEQUENCE [LARGE SCALE MRNA]</scope>
    <source>
        <strain>Berkeley</strain>
        <tissue>Embryo</tissue>
    </source>
</reference>
<reference key="5">
    <citation type="journal article" date="2003" name="Science">
        <title>Modulating sphingolipid biosynthetic pathway rescues photoreceptor degeneration.</title>
        <authorList>
            <person name="Acharya U."/>
            <person name="Patel S."/>
            <person name="Koundakjian E."/>
            <person name="Nagashima K."/>
            <person name="Han X."/>
            <person name="Acharya J.K."/>
        </authorList>
    </citation>
    <scope>OVEREXPRESSION</scope>
</reference>
<reference key="6">
    <citation type="journal article" date="2004" name="J. Neurosci.">
        <title>Ceramidase regulates synaptic vesicle exocytosis and trafficking.</title>
        <authorList>
            <person name="Rohrbough J."/>
            <person name="Rushton E."/>
            <person name="Palanker L."/>
            <person name="Woodruff E. III"/>
            <person name="Matthies H.J.G."/>
            <person name="Acharya U."/>
            <person name="Acharya J.K."/>
            <person name="Broadie K."/>
        </authorList>
    </citation>
    <scope>FUNCTION</scope>
    <scope>TISSUE SPECIFICITY</scope>
    <scope>MUTAGENESIS OF VAL-264</scope>
</reference>
<reference key="7">
    <citation type="journal article" date="2004" name="Proc. Natl. Acad. Sci. U.S.A.">
        <title>Ceramidase expression facilitates membrane turnover and endocytosis of rhodopsin in photoreceptors.</title>
        <authorList>
            <person name="Acharya U."/>
            <person name="Mowen M.B."/>
            <person name="Nagashima K."/>
            <person name="Acharya J.K."/>
        </authorList>
    </citation>
    <scope>OVEREXPRESSION</scope>
</reference>
<keyword id="KW-0325">Glycoprotein</keyword>
<keyword id="KW-0378">Hydrolase</keyword>
<keyword id="KW-0443">Lipid metabolism</keyword>
<keyword id="KW-1185">Reference proteome</keyword>
<keyword id="KW-0964">Secreted</keyword>
<keyword id="KW-0732">Signal</keyword>
<keyword id="KW-0746">Sphingolipid metabolism</keyword>